<keyword id="KW-0966">Cell projection</keyword>
<keyword id="KW-1185">Reference proteome</keyword>
<keyword id="KW-0716">Sensory transduction</keyword>
<reference key="1">
    <citation type="journal article" date="1998" name="Science">
        <title>Genome sequence of the nematode C. elegans: a platform for investigating biology.</title>
        <authorList>
            <consortium name="The C. elegans sequencing consortium"/>
        </authorList>
    </citation>
    <scope>NUCLEOTIDE SEQUENCE [LARGE SCALE GENOMIC DNA]</scope>
    <source>
        <strain>Bristol N2</strain>
    </source>
</reference>
<reference key="2">
    <citation type="journal article" date="2004" name="Neuron">
        <title>G protein-coupled receptor kinase function is essential for chemosensation in C. elegans.</title>
        <authorList>
            <person name="Fukuto H.S."/>
            <person name="Ferkey D.M."/>
            <person name="Apicella A.J."/>
            <person name="Lans H."/>
            <person name="Sharmeen T."/>
            <person name="Chen W."/>
            <person name="Lefkowitz R.J."/>
            <person name="Jansen G."/>
            <person name="Schafer W.R."/>
            <person name="Hart A.C."/>
        </authorList>
    </citation>
    <scope>TISSUE SPECIFICITY</scope>
    <scope>DISRUPTION PHENOTYPE</scope>
</reference>
<reference key="3">
    <citation type="journal article" date="2005" name="J. Biol. Chem.">
        <title>Caenorhabditus elegans arrestin regulates neural G protein signaling and olfactory adaptation and recovery.</title>
        <authorList>
            <person name="Palmitessa A."/>
            <person name="Hess H.A."/>
            <person name="Bany I.A."/>
            <person name="Kim Y.M."/>
            <person name="Koelle M.R."/>
            <person name="Benovic J.L."/>
        </authorList>
    </citation>
    <scope>FUNCTION</scope>
    <scope>INTERACTION WITH CHC-1 AND ABP-1</scope>
    <scope>SUBCELLULAR LOCATION</scope>
    <scope>TISSUE SPECIFICITY</scope>
    <scope>DOMAIN</scope>
    <scope>DISRUPTION PHENOTYPE</scope>
</reference>
<reference key="4">
    <citation type="journal article" date="2010" name="J. Biol. Chem.">
        <title>Arrestin and the multi-PDZ domain-containing protein MPZ-1 interact with phosphatase and tensin homolog (PTEN) and regulate Caenorhabditis elegans longevity.</title>
        <authorList>
            <person name="Palmitessa A."/>
            <person name="Benovic J.L."/>
        </authorList>
    </citation>
    <scope>FUNCTION</scope>
    <scope>IDENTIFICATION IN A DAF-18; ARR-1 AND MPZ-1 COMPLEX</scope>
    <scope>DISRUPTION PHENOTYPE</scope>
    <scope>MUTAGENESIS OF LEU-435</scope>
</reference>
<comment type="function">
    <text evidence="4 5">Adapter protein required for olfactory adaptation and recovery to volatile odorants, probably by desensitization of G-protein coupled receptors (GPCR) (PubMed:15878875). May play a role in clathrin-mediated GPCR endocytosis (PubMed:15878875). Acts as a positive regulator of insulin-like daf-2 signaling pathway probably by forming a complex with mpz-1 and phosphatase daf-18 likely resulting in daf-18 inhibition (PubMed:20207731). Involved in egg-laying (PubMed:15878875).</text>
</comment>
<comment type="subunit">
    <text evidence="4 5">Component of a complex composed of arr-1, daf-18 and mpz-1 (PubMed:20207731). Within the complex, interacts (via C-terminus) with mpz-1 (via PDZ domain) and phosphatase daf-18 (PubMed:20207731). May interact (via C-terminus) with clathrin chc-1 and beta-2 adaptin (AP2) apb-1 (PubMed:15878875).</text>
</comment>
<comment type="subcellular location">
    <subcellularLocation>
        <location evidence="4">Perikaryon</location>
    </subcellularLocation>
    <subcellularLocation>
        <location evidence="4">Cell projection</location>
        <location evidence="4">Dendrite</location>
    </subcellularLocation>
    <text evidence="4">Localizes to the amphid processes of chemosensory neurons.</text>
</comment>
<comment type="tissue specificity">
    <text evidence="3 4">Expressed in head neurons, nerve ring and ventral nerve cord (at protein level) (PubMed:15878875). Expressed in the nervous system including the nerve ring and the ventral and dorsal nerve cords (PubMed:15157420, PubMed:15878875). Highly expressed in amphid chemosensory neurons AWA, AWB, AWC, ADL and ASH, and in hermaphrodite specific neuron HSN (PubMed:15157420, PubMed:15878875). Also expressed in the intestine (PubMed:15157420).</text>
</comment>
<comment type="domain">
    <text evidence="1">The [DE]-X(1,2)-F-X-X-[FL]-X-X-X-R motif mediates the interaction with the AP-2 complex subunit apb-1.</text>
</comment>
<comment type="domain">
    <text evidence="4">The C-terminus (aa 369-435) is required for the recovery of chemotaxis from odorant-induced adaptation but is dispensable for behavioral adaptation to chemoattractant isoamyl alcohol.</text>
</comment>
<comment type="disruption phenotype">
    <text evidence="3 4 5">No effect on the response to the aversive chemical stimulus octanol or to volatile attractants (PubMed:15157420). Behavioral adaptation to prolonged exposure to isoamyl alcohol or benzaldehyde is impaired (PubMed:15878875). Recovery of chemotaxis from odorant-induced adaptation is impaired (PubMed:15878875). Moderate reduction in chemotaxis towards volatile attractant diacetyl but not towards isoamyl alcohol and benzaldehyde (PubMed:15878875). Slight defect in egg-laying (PubMed:15878875). Increased lifespan and nuclear localization of daf-16 (PubMed:20207731). Reduced lifespan in a daf-16 (mu86) mutant background or in a mpz-1 RNAi-mediated knockdown background (PubMed:20207731).</text>
</comment>
<comment type="similarity">
    <text evidence="6">Belongs to the arrestin family.</text>
</comment>
<feature type="chain" id="PRO_0000205202" description="Beta-arrestin arr-1">
    <location>
        <begin position="1"/>
        <end position="435"/>
    </location>
</feature>
<feature type="region of interest" description="Disordered" evidence="2">
    <location>
        <begin position="358"/>
        <end position="382"/>
    </location>
</feature>
<feature type="region of interest" description="Disordered" evidence="2">
    <location>
        <begin position="416"/>
        <end position="435"/>
    </location>
</feature>
<feature type="short sequence motif" description="Clathrin box" evidence="1">
    <location>
        <begin position="390"/>
        <end position="394"/>
    </location>
</feature>
<feature type="short sequence motif" description="[DE]-X(1,2)-F-X-X-[FL]-X-X-X-R motif" evidence="1">
    <location>
        <begin position="404"/>
        <end position="414"/>
    </location>
</feature>
<feature type="compositionally biased region" description="Basic and acidic residues" evidence="2">
    <location>
        <begin position="362"/>
        <end position="372"/>
    </location>
</feature>
<feature type="compositionally biased region" description="Low complexity" evidence="2">
    <location>
        <begin position="424"/>
        <end position="435"/>
    </location>
</feature>
<feature type="mutagenesis site" description="Prevents interaction with mpz-1." evidence="5">
    <location>
        <begin position="432"/>
        <end position="435"/>
    </location>
</feature>
<feature type="mutagenesis site" description="Increases lifespan. Prevents interaction with mpz-1." evidence="5">
    <original>L</original>
    <variation>A</variation>
    <location>
        <position position="435"/>
    </location>
</feature>
<evidence type="ECO:0000250" key="1">
    <source>
        <dbReference type="UniProtKB" id="Q5SW96"/>
    </source>
</evidence>
<evidence type="ECO:0000256" key="2">
    <source>
        <dbReference type="SAM" id="MobiDB-lite"/>
    </source>
</evidence>
<evidence type="ECO:0000269" key="3">
    <source>
    </source>
</evidence>
<evidence type="ECO:0000269" key="4">
    <source>
    </source>
</evidence>
<evidence type="ECO:0000269" key="5">
    <source>
    </source>
</evidence>
<evidence type="ECO:0000305" key="6"/>
<evidence type="ECO:0000312" key="7">
    <source>
        <dbReference type="WormBase" id="F53H8.2"/>
    </source>
</evidence>
<proteinExistence type="evidence at protein level"/>
<name>ARRB_CAEEL</name>
<accession>P51485</accession>
<gene>
    <name evidence="7" type="primary">arr-1</name>
    <name evidence="7" type="ORF">F53H8.2</name>
</gene>
<sequence length="435" mass="48458">MVDEDKKSGTRVFKKTSPNGKITTYLGKRDFIDRGDYVDLIDGMVLIDEEYIKDNRKVTAHLLAAFRYGREDLDVLGLTFRKDLISETFQVYPQTDKSISRPLSRLQERLKRKLGANAFPFWFEVAPKSASSVTLQPAPGDTGKPCGVDYELKTFVAVTDGSSGEKPKKSALSNTVRLAIRKLTYAPFESRPQPMVDVSKYFMMSSGLLHMEVSLDKEMYYHGESISVNVHIQNNSNKTVKKLKIYIIQVADICLFTTASYSCEVARIESNEGFPVGPGGTLSKVFAVCPLLSNNKDKRGLALDGQLKHEDTNLASSTILDSKTSKESLGIVVQYRVKVRAVLGPLNGELFAELPFTLTHSKPPESPERTDRGLPSIEATNGSEPVDIDLIQLHEELEPRYDDDLIFEDFARMRLHGNDSEDQPSPSANLPPSLL</sequence>
<protein>
    <recommendedName>
        <fullName evidence="6">Beta-arrestin arr-1</fullName>
    </recommendedName>
</protein>
<organism>
    <name type="scientific">Caenorhabditis elegans</name>
    <dbReference type="NCBI Taxonomy" id="6239"/>
    <lineage>
        <taxon>Eukaryota</taxon>
        <taxon>Metazoa</taxon>
        <taxon>Ecdysozoa</taxon>
        <taxon>Nematoda</taxon>
        <taxon>Chromadorea</taxon>
        <taxon>Rhabditida</taxon>
        <taxon>Rhabditina</taxon>
        <taxon>Rhabditomorpha</taxon>
        <taxon>Rhabditoidea</taxon>
        <taxon>Rhabditidae</taxon>
        <taxon>Peloderinae</taxon>
        <taxon>Caenorhabditis</taxon>
    </lineage>
</organism>
<dbReference type="EMBL" id="FO080855">
    <property type="protein sequence ID" value="CCD67242.1"/>
    <property type="molecule type" value="Genomic_DNA"/>
</dbReference>
<dbReference type="PIR" id="T34297">
    <property type="entry name" value="T34297"/>
</dbReference>
<dbReference type="RefSeq" id="NP_508183.1">
    <property type="nucleotide sequence ID" value="NM_075782.8"/>
</dbReference>
<dbReference type="SMR" id="P51485"/>
<dbReference type="BioGRID" id="45399">
    <property type="interactions" value="3"/>
</dbReference>
<dbReference type="ComplexPortal" id="CPX-3881">
    <property type="entry name" value="arr-1-mpz-1-daf-18 complex"/>
</dbReference>
<dbReference type="FunCoup" id="P51485">
    <property type="interactions" value="698"/>
</dbReference>
<dbReference type="STRING" id="6239.F53H8.2.1"/>
<dbReference type="PaxDb" id="6239-F53H8.2"/>
<dbReference type="PeptideAtlas" id="P51485"/>
<dbReference type="EnsemblMetazoa" id="F53H8.2.1">
    <property type="protein sequence ID" value="F53H8.2.1"/>
    <property type="gene ID" value="WBGene00000195"/>
</dbReference>
<dbReference type="GeneID" id="180446"/>
<dbReference type="KEGG" id="cel:CELE_F53H8.2"/>
<dbReference type="UCSC" id="F53H8.2">
    <property type="organism name" value="c. elegans"/>
</dbReference>
<dbReference type="AGR" id="WB:WBGene00000195"/>
<dbReference type="CTD" id="180446"/>
<dbReference type="WormBase" id="F53H8.2">
    <property type="protein sequence ID" value="CE28831"/>
    <property type="gene ID" value="WBGene00000195"/>
    <property type="gene designation" value="arr-1"/>
</dbReference>
<dbReference type="eggNOG" id="KOG3865">
    <property type="taxonomic scope" value="Eukaryota"/>
</dbReference>
<dbReference type="GeneTree" id="ENSGT00950000182887"/>
<dbReference type="HOGENOM" id="CLU_033484_1_0_1"/>
<dbReference type="InParanoid" id="P51485"/>
<dbReference type="OMA" id="MQLERPM"/>
<dbReference type="OrthoDB" id="298939at2759"/>
<dbReference type="PhylomeDB" id="P51485"/>
<dbReference type="Reactome" id="R-CEL-2514859">
    <property type="pathway name" value="Inactivation, recovery and regulation of the phototransduction cascade"/>
</dbReference>
<dbReference type="Reactome" id="R-CEL-432720">
    <property type="pathway name" value="Lysosome Vesicle Biogenesis"/>
</dbReference>
<dbReference type="Reactome" id="R-CEL-432722">
    <property type="pathway name" value="Golgi Associated Vesicle Biogenesis"/>
</dbReference>
<dbReference type="Reactome" id="R-CEL-456926">
    <property type="pathway name" value="Thrombin signalling through proteinase activated receptors (PARs)"/>
</dbReference>
<dbReference type="Reactome" id="R-CEL-5099900">
    <property type="pathway name" value="WNT5A-dependent internalization of FZD4"/>
</dbReference>
<dbReference type="Reactome" id="R-CEL-5674135">
    <property type="pathway name" value="MAP2K and MAPK activation"/>
</dbReference>
<dbReference type="Reactome" id="R-CEL-8856825">
    <property type="pathway name" value="Cargo recognition for clathrin-mediated endocytosis"/>
</dbReference>
<dbReference type="Reactome" id="R-CEL-8856828">
    <property type="pathway name" value="Clathrin-mediated endocytosis"/>
</dbReference>
<dbReference type="Reactome" id="R-CEL-9839389">
    <property type="pathway name" value="TGFBR3 regulates TGF-beta signaling"/>
</dbReference>
<dbReference type="PRO" id="PR:P51485"/>
<dbReference type="Proteomes" id="UP000001940">
    <property type="component" value="Chromosome X"/>
</dbReference>
<dbReference type="Bgee" id="WBGene00000195">
    <property type="expression patterns" value="Expressed in embryo and 4 other cell types or tissues"/>
</dbReference>
<dbReference type="GO" id="GO:0005737">
    <property type="term" value="C:cytoplasm"/>
    <property type="evidence" value="ECO:0000318"/>
    <property type="project" value="GO_Central"/>
</dbReference>
<dbReference type="GO" id="GO:0030425">
    <property type="term" value="C:dendrite"/>
    <property type="evidence" value="ECO:0007669"/>
    <property type="project" value="UniProtKB-SubCell"/>
</dbReference>
<dbReference type="GO" id="GO:0043204">
    <property type="term" value="C:perikaryon"/>
    <property type="evidence" value="ECO:0007669"/>
    <property type="project" value="UniProtKB-SubCell"/>
</dbReference>
<dbReference type="GO" id="GO:0062049">
    <property type="term" value="C:protein phosphatase inhibitor complex"/>
    <property type="evidence" value="ECO:0000303"/>
    <property type="project" value="ComplexPortal"/>
</dbReference>
<dbReference type="GO" id="GO:0001664">
    <property type="term" value="F:G protein-coupled receptor binding"/>
    <property type="evidence" value="ECO:0000318"/>
    <property type="project" value="GO_Central"/>
</dbReference>
<dbReference type="GO" id="GO:0002031">
    <property type="term" value="P:G protein-coupled receptor internalization"/>
    <property type="evidence" value="ECO:0000318"/>
    <property type="project" value="GO_Central"/>
</dbReference>
<dbReference type="GO" id="GO:0040010">
    <property type="term" value="P:positive regulation of growth rate"/>
    <property type="evidence" value="ECO:0000316"/>
    <property type="project" value="WormBase"/>
</dbReference>
<dbReference type="GO" id="GO:0046628">
    <property type="term" value="P:positive regulation of insulin receptor signaling pathway"/>
    <property type="evidence" value="ECO:0000303"/>
    <property type="project" value="ComplexPortal"/>
</dbReference>
<dbReference type="GO" id="GO:0007165">
    <property type="term" value="P:signal transduction"/>
    <property type="evidence" value="ECO:0007669"/>
    <property type="project" value="InterPro"/>
</dbReference>
<dbReference type="FunFam" id="2.60.40.640:FF:000036">
    <property type="entry name" value="beta-arrestin-2 isoform X2"/>
    <property type="match status" value="1"/>
</dbReference>
<dbReference type="FunFam" id="2.60.40.840:FF:000003">
    <property type="entry name" value="Kurtz arrestin"/>
    <property type="match status" value="1"/>
</dbReference>
<dbReference type="Gene3D" id="2.60.40.640">
    <property type="match status" value="1"/>
</dbReference>
<dbReference type="Gene3D" id="2.60.40.840">
    <property type="match status" value="1"/>
</dbReference>
<dbReference type="InterPro" id="IPR000698">
    <property type="entry name" value="Arrestin"/>
</dbReference>
<dbReference type="InterPro" id="IPR014752">
    <property type="entry name" value="Arrestin-like_C"/>
</dbReference>
<dbReference type="InterPro" id="IPR011021">
    <property type="entry name" value="Arrestin-like_N"/>
</dbReference>
<dbReference type="InterPro" id="IPR011022">
    <property type="entry name" value="Arrestin_C-like"/>
</dbReference>
<dbReference type="InterPro" id="IPR017864">
    <property type="entry name" value="Arrestin_CS"/>
</dbReference>
<dbReference type="InterPro" id="IPR014753">
    <property type="entry name" value="Arrestin_N"/>
</dbReference>
<dbReference type="InterPro" id="IPR014756">
    <property type="entry name" value="Ig_E-set"/>
</dbReference>
<dbReference type="PANTHER" id="PTHR11792">
    <property type="entry name" value="ARRESTIN"/>
    <property type="match status" value="1"/>
</dbReference>
<dbReference type="PANTHER" id="PTHR11792:SF17">
    <property type="entry name" value="KURTZ ARRESTIN"/>
    <property type="match status" value="1"/>
</dbReference>
<dbReference type="Pfam" id="PF02752">
    <property type="entry name" value="Arrestin_C"/>
    <property type="match status" value="1"/>
</dbReference>
<dbReference type="Pfam" id="PF00339">
    <property type="entry name" value="Arrestin_N"/>
    <property type="match status" value="1"/>
</dbReference>
<dbReference type="PRINTS" id="PR00309">
    <property type="entry name" value="ARRESTIN"/>
</dbReference>
<dbReference type="SMART" id="SM01017">
    <property type="entry name" value="Arrestin_C"/>
    <property type="match status" value="1"/>
</dbReference>
<dbReference type="SUPFAM" id="SSF81296">
    <property type="entry name" value="E set domains"/>
    <property type="match status" value="2"/>
</dbReference>
<dbReference type="PROSITE" id="PS00295">
    <property type="entry name" value="ARRESTINS"/>
    <property type="match status" value="1"/>
</dbReference>